<name>RPOC2_MAIZE</name>
<gene>
    <name evidence="1" type="primary">rpoC2</name>
</gene>
<accession>P16025</accession>
<proteinExistence type="inferred from homology"/>
<evidence type="ECO:0000255" key="1">
    <source>
        <dbReference type="HAMAP-Rule" id="MF_01324"/>
    </source>
</evidence>
<evidence type="ECO:0000256" key="2">
    <source>
        <dbReference type="SAM" id="MobiDB-lite"/>
    </source>
</evidence>
<evidence type="ECO:0000305" key="3"/>
<organism>
    <name type="scientific">Zea mays</name>
    <name type="common">Maize</name>
    <dbReference type="NCBI Taxonomy" id="4577"/>
    <lineage>
        <taxon>Eukaryota</taxon>
        <taxon>Viridiplantae</taxon>
        <taxon>Streptophyta</taxon>
        <taxon>Embryophyta</taxon>
        <taxon>Tracheophyta</taxon>
        <taxon>Spermatophyta</taxon>
        <taxon>Magnoliopsida</taxon>
        <taxon>Liliopsida</taxon>
        <taxon>Poales</taxon>
        <taxon>Poaceae</taxon>
        <taxon>PACMAD clade</taxon>
        <taxon>Panicoideae</taxon>
        <taxon>Andropogonodae</taxon>
        <taxon>Andropogoneae</taxon>
        <taxon>Tripsacinae</taxon>
        <taxon>Zea</taxon>
    </lineage>
</organism>
<keyword id="KW-0150">Chloroplast</keyword>
<keyword id="KW-0240">DNA-directed RNA polymerase</keyword>
<keyword id="KW-0479">Metal-binding</keyword>
<keyword id="KW-0548">Nucleotidyltransferase</keyword>
<keyword id="KW-0934">Plastid</keyword>
<keyword id="KW-1185">Reference proteome</keyword>
<keyword id="KW-0804">Transcription</keyword>
<keyword id="KW-0808">Transferase</keyword>
<keyword id="KW-0862">Zinc</keyword>
<dbReference type="EC" id="2.7.7.6" evidence="1"/>
<dbReference type="EMBL" id="X17318">
    <property type="protein sequence ID" value="CAA35197.1"/>
    <property type="molecule type" value="Genomic_DNA"/>
</dbReference>
<dbReference type="EMBL" id="M31208">
    <property type="protein sequence ID" value="AAA84489.1"/>
    <property type="molecule type" value="Genomic_DNA"/>
</dbReference>
<dbReference type="EMBL" id="X86563">
    <property type="protein sequence ID" value="CAA60278.1"/>
    <property type="molecule type" value="Genomic_DNA"/>
</dbReference>
<dbReference type="EMBL" id="X52270">
    <property type="protein sequence ID" value="CAA36511.1"/>
    <property type="molecule type" value="Genomic_DNA"/>
</dbReference>
<dbReference type="PIR" id="S12802">
    <property type="entry name" value="RNZMB2"/>
</dbReference>
<dbReference type="RefSeq" id="NP_043017.1">
    <property type="nucleotide sequence ID" value="NC_001666.2"/>
</dbReference>
<dbReference type="SMR" id="P16025"/>
<dbReference type="FunCoup" id="P16025">
    <property type="interactions" value="34"/>
</dbReference>
<dbReference type="STRING" id="4577.P16025"/>
<dbReference type="PaxDb" id="4577-GRMZM5G892247_P01"/>
<dbReference type="GeneID" id="845227"/>
<dbReference type="KEGG" id="zma:845227"/>
<dbReference type="MaizeGDB" id="69586"/>
<dbReference type="eggNOG" id="ENOG502QPYA">
    <property type="taxonomic scope" value="Eukaryota"/>
</dbReference>
<dbReference type="HOGENOM" id="CLU_000524_1_0_1"/>
<dbReference type="InParanoid" id="P16025"/>
<dbReference type="OMA" id="IEGKSDW"/>
<dbReference type="OrthoDB" id="725702at2759"/>
<dbReference type="Proteomes" id="UP000007305">
    <property type="component" value="Chloroplast"/>
</dbReference>
<dbReference type="ExpressionAtlas" id="P16025">
    <property type="expression patterns" value="baseline and differential"/>
</dbReference>
<dbReference type="GO" id="GO:0009507">
    <property type="term" value="C:chloroplast"/>
    <property type="evidence" value="ECO:0007669"/>
    <property type="project" value="UniProtKB-SubCell"/>
</dbReference>
<dbReference type="GO" id="GO:0000428">
    <property type="term" value="C:DNA-directed RNA polymerase complex"/>
    <property type="evidence" value="ECO:0007669"/>
    <property type="project" value="UniProtKB-KW"/>
</dbReference>
<dbReference type="GO" id="GO:0005739">
    <property type="term" value="C:mitochondrion"/>
    <property type="evidence" value="ECO:0007669"/>
    <property type="project" value="GOC"/>
</dbReference>
<dbReference type="GO" id="GO:0003677">
    <property type="term" value="F:DNA binding"/>
    <property type="evidence" value="ECO:0007669"/>
    <property type="project" value="UniProtKB-UniRule"/>
</dbReference>
<dbReference type="GO" id="GO:0003899">
    <property type="term" value="F:DNA-directed RNA polymerase activity"/>
    <property type="evidence" value="ECO:0007669"/>
    <property type="project" value="UniProtKB-UniRule"/>
</dbReference>
<dbReference type="GO" id="GO:0008270">
    <property type="term" value="F:zinc ion binding"/>
    <property type="evidence" value="ECO:0007669"/>
    <property type="project" value="UniProtKB-UniRule"/>
</dbReference>
<dbReference type="GO" id="GO:0006351">
    <property type="term" value="P:DNA-templated transcription"/>
    <property type="evidence" value="ECO:0007669"/>
    <property type="project" value="UniProtKB-UniRule"/>
</dbReference>
<dbReference type="CDD" id="cd02655">
    <property type="entry name" value="RNAP_beta'_C"/>
    <property type="match status" value="1"/>
</dbReference>
<dbReference type="Gene3D" id="1.10.132.30">
    <property type="match status" value="1"/>
</dbReference>
<dbReference type="Gene3D" id="1.10.150.390">
    <property type="match status" value="1"/>
</dbReference>
<dbReference type="Gene3D" id="1.10.1790.20">
    <property type="match status" value="1"/>
</dbReference>
<dbReference type="Gene3D" id="1.10.274.100">
    <property type="entry name" value="RNA polymerase Rpb1, domain 3"/>
    <property type="match status" value="1"/>
</dbReference>
<dbReference type="HAMAP" id="MF_01324">
    <property type="entry name" value="RNApol_bact_RpoC2"/>
    <property type="match status" value="1"/>
</dbReference>
<dbReference type="InterPro" id="IPR012756">
    <property type="entry name" value="DNA-dir_RpoC2_beta_pp"/>
</dbReference>
<dbReference type="InterPro" id="IPR050254">
    <property type="entry name" value="RNA_pol_beta''_euk"/>
</dbReference>
<dbReference type="InterPro" id="IPR042102">
    <property type="entry name" value="RNA_pol_Rpb1_3_sf"/>
</dbReference>
<dbReference type="InterPro" id="IPR007083">
    <property type="entry name" value="RNA_pol_Rpb1_4"/>
</dbReference>
<dbReference type="InterPro" id="IPR007081">
    <property type="entry name" value="RNA_pol_Rpb1_5"/>
</dbReference>
<dbReference type="InterPro" id="IPR038120">
    <property type="entry name" value="Rpb1_funnel_sf"/>
</dbReference>
<dbReference type="NCBIfam" id="TIGR02388">
    <property type="entry name" value="rpoC2_cyan"/>
    <property type="match status" value="1"/>
</dbReference>
<dbReference type="PANTHER" id="PTHR34995">
    <property type="entry name" value="DNA-DIRECTED RNA POLYMERASE SUBUNIT BETA"/>
    <property type="match status" value="1"/>
</dbReference>
<dbReference type="PANTHER" id="PTHR34995:SF1">
    <property type="entry name" value="DNA-DIRECTED RNA POLYMERASE SUBUNIT BETA"/>
    <property type="match status" value="1"/>
</dbReference>
<dbReference type="Pfam" id="PF05000">
    <property type="entry name" value="RNA_pol_Rpb1_4"/>
    <property type="match status" value="1"/>
</dbReference>
<dbReference type="Pfam" id="PF04998">
    <property type="entry name" value="RNA_pol_Rpb1_5"/>
    <property type="match status" value="2"/>
</dbReference>
<dbReference type="SUPFAM" id="SSF64484">
    <property type="entry name" value="beta and beta-prime subunits of DNA dependent RNA-polymerase"/>
    <property type="match status" value="1"/>
</dbReference>
<geneLocation type="chloroplast"/>
<comment type="function">
    <text evidence="1">DNA-dependent RNA polymerase catalyzes the transcription of DNA into RNA using the four ribonucleoside triphosphates as substrates.</text>
</comment>
<comment type="catalytic activity">
    <reaction evidence="1">
        <text>RNA(n) + a ribonucleoside 5'-triphosphate = RNA(n+1) + diphosphate</text>
        <dbReference type="Rhea" id="RHEA:21248"/>
        <dbReference type="Rhea" id="RHEA-COMP:14527"/>
        <dbReference type="Rhea" id="RHEA-COMP:17342"/>
        <dbReference type="ChEBI" id="CHEBI:33019"/>
        <dbReference type="ChEBI" id="CHEBI:61557"/>
        <dbReference type="ChEBI" id="CHEBI:140395"/>
        <dbReference type="EC" id="2.7.7.6"/>
    </reaction>
</comment>
<comment type="cofactor">
    <cofactor evidence="1">
        <name>Zn(2+)</name>
        <dbReference type="ChEBI" id="CHEBI:29105"/>
    </cofactor>
    <text evidence="1">Binds 1 Zn(2+) ion per subunit.</text>
</comment>
<comment type="subunit">
    <text evidence="1">In plastids the minimal PEP RNA polymerase catalytic core is composed of four subunits: alpha, beta, beta', and beta''. When a (nuclear-encoded) sigma factor is associated with the core the holoenzyme is formed, which can initiate transcription.</text>
</comment>
<comment type="subcellular location">
    <subcellularLocation>
        <location evidence="1">Plastid</location>
        <location evidence="1">Chloroplast</location>
    </subcellularLocation>
</comment>
<comment type="similarity">
    <text evidence="1">Belongs to the RNA polymerase beta' chain family. RpoC2 subfamily.</text>
</comment>
<reference key="1">
    <citation type="journal article" date="1990" name="Mol. Gen. Genet.">
        <title>Nucleotide sequence of the maize chloroplast rpo B/C1/C2 operon: comparison between the derived protein primary structures from various organisms with respect to functional domains.</title>
        <authorList>
            <person name="Igloi G.L."/>
            <person name="Meinke A."/>
            <person name="Doery I."/>
            <person name="Koessel H."/>
        </authorList>
    </citation>
    <scope>NUCLEOTIDE SEQUENCE [LARGE SCALE GENOMIC DNA]</scope>
    <source>
        <strain>cv. B73</strain>
    </source>
</reference>
<reference key="2">
    <citation type="journal article" date="1990" name="Nucleic Acids Res.">
        <title>Nucleotide and derived amino acid sequence of rps2 from maize chloroplasts.</title>
        <authorList>
            <person name="Igloi G.L."/>
            <person name="Meinke A."/>
            <person name="Doery I."/>
            <person name="Koessel H."/>
        </authorList>
    </citation>
    <scope>NUCLEOTIDE SEQUENCE [GENOMIC DNA]</scope>
</reference>
<reference key="3">
    <citation type="journal article" date="1995" name="J. Mol. Biol.">
        <title>Complete sequence of the maize chloroplast genome: gene content, hotspots of divergence and fine tuning of genetic information by transcript editing.</title>
        <authorList>
            <person name="Maier R.M."/>
            <person name="Neckermann K."/>
            <person name="Igloi G.L."/>
            <person name="Koessel H."/>
        </authorList>
    </citation>
    <scope>NUCLEOTIDE SEQUENCE [LARGE SCALE GENOMIC DNA]</scope>
    <source>
        <strain>cv. B73</strain>
    </source>
</reference>
<reference key="4">
    <citation type="journal article" date="1990" name="Proc. Natl. Acad. Sci. U.S.A.">
        <title>Maize chloroplast RNA polymerase: the 180-, 120-, and 38-kilodalton polypeptides are encoded in chloroplast genes.</title>
        <authorList>
            <person name="Hu J."/>
            <person name="Bogorad L."/>
        </authorList>
    </citation>
    <scope>NUCLEOTIDE SEQUENCE [GENOMIC DNA] OF 1-52</scope>
</reference>
<reference key="5">
    <citation type="journal article" date="1990" name="Nucleic Acids Res.">
        <title>Nucleotide sequence of a 3.46 kb region of maize chloroplast DNA containing the gene cluster rpoC2-rps2-atpI-atpH.</title>
        <authorList>
            <person name="Stahl D."/>
            <person name="Rodermel S."/>
            <person name="Subramanian A.R."/>
            <person name="Bogorad L."/>
        </authorList>
    </citation>
    <scope>NUCLEOTIDE SEQUENCE [GENOMIC DNA] OF 1316-1527</scope>
    <source>
        <strain>cv. FR9cms X FR37</strain>
        <tissue>Leaf</tissue>
    </source>
</reference>
<sequence length="1527" mass="176083">MAERANLVFHNKEIDGTAMKRLISRLIDHFGMGYTSHILDQIKTLGFHQATTTSISLGIEDLLTIPSKGWLVQDAEQQSFLLEKHYYYGAIHAVEKLRQSVEIWYATSEYLKQEMNSNFRITDPSNPVYLMSFSGARGNASQVHQLVGMRGLMADPQGQMIHLPIQSNLREGLSLTEYIISCYGARKGVVDTAVRTADAGYLTRRLVEVVQHIIVRRRDCGTIQGISVSPQNGMTEKLFVQTLIGRVLADDIYIGSRCIASRNQDIGIGLVNRFITAFRAQPFRAQPIYIRTPFTCRSTSWICQLCYGRSPTHGDLVELGEAVGIIAGQSIGEPGTQLTLRTFHTGGVFTGGTADLIRSPSNGKIQFNEDLVHPTRTRHGQPAFLCYIDLHVTIQSQDILHSVNIPLKSLILVQNDQYVESEQVIAEIRAGTSTLHFKEKVQKHIYSESDGEMHWSTDVYHAPEYQYGNLRRLPKTSHLWILSVSMCRSSIASFSLHKDQDQMNTYSFSVDGRYIFDFSMANDQVSHRLLDTFGKKDREILDYLTPDRIVFNGHWNCFYPSILQDNSDLLAKKRRNRLVVPLQYHQEQEKERISCLGISMEIPFMGVLRRNTIFAYFDDPRYRKDKRGSGIVKFRYRTLEEEYRTQEEEYRTREEEYRTREEDSEDEYESPENKYRTREGEGEYKILEDEYRTLEDEYETLEDEYGILEDEYRTLEKDSEEEYGSLENKYRTREGEGEYEILEEESEEEYGSSEDGSEKEYGTLEEDSEEDSEEDSEDEYGSPEEDSILKKEGFIEHRGTKEFSLKYQKEVDRFFFILQELHILPRSSSLKVLDNSIIGVDTQLTKNTRSRLGGLVRVKRKKSHTELKIFSGDIHFPEEADKILGGSLIPPEREKKDSKESKKRKNWVYVQRKKFLKSKEKYFVSVRPAVAYEMDEGINLATLFPQDLLQEEDNLQLRLVNFISHENSKLTQRIYHTNSQFVRTCLVVNWEQEEKEGARASLVEVKTNDLIRDFLRIELVKSTILYTRRRYDRTSVGLIPNNRLDRNNTNSFYSKAKIQSLSQHQEVIGTLLNRNKEYPSLMILLASNCSRIGLFKNSKYPNAVKESNPRIPIRDIFGLLGVIVPSISNFSSSYYLLTHNQILLKKYLFLDNLKQTLQVLQGLKYSLIDENKRISNFDSNIMLEPFHLNWHFLHHDSWEETLAIIHLGQFICENLCLFKLHIKKSGQIFIVNMDSFVLRAAKPYLATIGATVHGHYGKILYKGDRLVTFIYEKSRSSDITQGLPKVEQIFEARSIDSLSPNLERRIEDWNERIPRILGVPWGFLIGAELTIAQSRISLVNKIQKVYRSQGVQIHNRHIEIIIRQVTSKVRVSEDGMSNVFLPGELIGLLRAERAGRALDESIYYRAILLGITRASLNTQSFISEASFQETARVLAKAALRGRIDWLKGLKENVVLGGIIPVGTGFQKFVHRSPQDKNLYLEIQKKNLFASEMRDILFLHTELVSSDSDVTNNFYETSETPFTPIYTI</sequence>
<protein>
    <recommendedName>
        <fullName evidence="1">DNA-directed RNA polymerase subunit beta''</fullName>
        <ecNumber evidence="1">2.7.7.6</ecNumber>
    </recommendedName>
    <alternativeName>
        <fullName evidence="1">PEP</fullName>
    </alternativeName>
    <alternativeName>
        <fullName evidence="1">Plastid-encoded RNA polymerase subunit beta''</fullName>
        <shortName evidence="1">RNA polymerase subunit beta''</shortName>
    </alternativeName>
</protein>
<feature type="chain" id="PRO_0000067929" description="DNA-directed RNA polymerase subunit beta''">
    <location>
        <begin position="1"/>
        <end position="1527"/>
    </location>
</feature>
<feature type="region of interest" description="Disordered" evidence="2">
    <location>
        <begin position="644"/>
        <end position="681"/>
    </location>
</feature>
<feature type="region of interest" description="Disordered" evidence="2">
    <location>
        <begin position="712"/>
        <end position="793"/>
    </location>
</feature>
<feature type="compositionally biased region" description="Basic and acidic residues" evidence="2">
    <location>
        <begin position="644"/>
        <end position="661"/>
    </location>
</feature>
<feature type="compositionally biased region" description="Basic and acidic residues" evidence="2">
    <location>
        <begin position="671"/>
        <end position="681"/>
    </location>
</feature>
<feature type="compositionally biased region" description="Acidic residues" evidence="2">
    <location>
        <begin position="737"/>
        <end position="755"/>
    </location>
</feature>
<feature type="compositionally biased region" description="Acidic residues" evidence="2">
    <location>
        <begin position="763"/>
        <end position="786"/>
    </location>
</feature>
<feature type="binding site" evidence="1">
    <location>
        <position position="220"/>
    </location>
    <ligand>
        <name>Zn(2+)</name>
        <dbReference type="ChEBI" id="CHEBI:29105"/>
    </ligand>
</feature>
<feature type="binding site" evidence="1">
    <location>
        <position position="296"/>
    </location>
    <ligand>
        <name>Zn(2+)</name>
        <dbReference type="ChEBI" id="CHEBI:29105"/>
    </ligand>
</feature>
<feature type="binding site" evidence="1">
    <location>
        <position position="303"/>
    </location>
    <ligand>
        <name>Zn(2+)</name>
        <dbReference type="ChEBI" id="CHEBI:29105"/>
    </ligand>
</feature>
<feature type="binding site" evidence="1">
    <location>
        <position position="306"/>
    </location>
    <ligand>
        <name>Zn(2+)</name>
        <dbReference type="ChEBI" id="CHEBI:29105"/>
    </ligand>
</feature>
<feature type="sequence conflict" description="In Ref. 4; AAA84489." evidence="3" ref="4">
    <original>R</original>
    <variation>S</variation>
    <location>
        <position position="25"/>
    </location>
</feature>